<dbReference type="EMBL" id="M34844">
    <property type="protein sequence ID" value="AAA35253.1"/>
    <property type="molecule type" value="Genomic_DNA"/>
</dbReference>
<dbReference type="EMBL" id="CR382125">
    <property type="protein sequence ID" value="CAG99286.1"/>
    <property type="molecule type" value="Genomic_DNA"/>
</dbReference>
<dbReference type="PIR" id="A35618">
    <property type="entry name" value="A35618"/>
</dbReference>
<dbReference type="RefSeq" id="XP_454199.1">
    <property type="nucleotide sequence ID" value="XM_454199.1"/>
</dbReference>
<dbReference type="SMR" id="P18413"/>
<dbReference type="FunCoup" id="P18413">
    <property type="interactions" value="396"/>
</dbReference>
<dbReference type="STRING" id="284590.P18413"/>
<dbReference type="PaxDb" id="284590-P18413"/>
<dbReference type="KEGG" id="kla:KLLA0_E05611g"/>
<dbReference type="eggNOG" id="KOG3106">
    <property type="taxonomic scope" value="Eukaryota"/>
</dbReference>
<dbReference type="HOGENOM" id="CLU_057784_0_0_1"/>
<dbReference type="InParanoid" id="P18413"/>
<dbReference type="OMA" id="WKSRSCE"/>
<dbReference type="Proteomes" id="UP000000598">
    <property type="component" value="Chromosome E"/>
</dbReference>
<dbReference type="GO" id="GO:0005789">
    <property type="term" value="C:endoplasmic reticulum membrane"/>
    <property type="evidence" value="ECO:0007669"/>
    <property type="project" value="UniProtKB-SubCell"/>
</dbReference>
<dbReference type="GO" id="GO:0046923">
    <property type="term" value="F:ER retention sequence binding"/>
    <property type="evidence" value="ECO:0007669"/>
    <property type="project" value="InterPro"/>
</dbReference>
<dbReference type="GO" id="GO:0006621">
    <property type="term" value="P:protein retention in ER lumen"/>
    <property type="evidence" value="ECO:0007669"/>
    <property type="project" value="InterPro"/>
</dbReference>
<dbReference type="GO" id="GO:0015031">
    <property type="term" value="P:protein transport"/>
    <property type="evidence" value="ECO:0007669"/>
    <property type="project" value="UniProtKB-KW"/>
</dbReference>
<dbReference type="GO" id="GO:0016192">
    <property type="term" value="P:vesicle-mediated transport"/>
    <property type="evidence" value="ECO:0007669"/>
    <property type="project" value="UniProtKB-KW"/>
</dbReference>
<dbReference type="InterPro" id="IPR000133">
    <property type="entry name" value="ER_ret_rcpt"/>
</dbReference>
<dbReference type="PANTHER" id="PTHR10585">
    <property type="entry name" value="ER LUMEN PROTEIN RETAINING RECEPTOR"/>
    <property type="match status" value="1"/>
</dbReference>
<dbReference type="Pfam" id="PF00810">
    <property type="entry name" value="ER_lumen_recept"/>
    <property type="match status" value="1"/>
</dbReference>
<dbReference type="PRINTS" id="PR00660">
    <property type="entry name" value="ERLUMENR"/>
</dbReference>
<dbReference type="PROSITE" id="PS00951">
    <property type="entry name" value="ER_LUMEN_RECEPTOR_1"/>
    <property type="match status" value="1"/>
</dbReference>
<dbReference type="PROSITE" id="PS00952">
    <property type="entry name" value="ER_LUMEN_RECEPTOR_2"/>
    <property type="match status" value="1"/>
</dbReference>
<protein>
    <recommendedName>
        <fullName>ER lumen protein-retaining receptor</fullName>
    </recommendedName>
</protein>
<gene>
    <name type="primary">ERD2</name>
    <name type="ordered locus">KLLA0E05566g</name>
</gene>
<reference key="1">
    <citation type="journal article" date="1990" name="Cell">
        <title>The ERD2 gene determines the specificity of the luminal ER protein retention system.</title>
        <authorList>
            <person name="Lewis M.J."/>
            <person name="Sweet D.J."/>
            <person name="Pelham H.R.B."/>
        </authorList>
    </citation>
    <scope>NUCLEOTIDE SEQUENCE [GENOMIC DNA]</scope>
</reference>
<reference key="2">
    <citation type="journal article" date="2004" name="Nature">
        <title>Genome evolution in yeasts.</title>
        <authorList>
            <person name="Dujon B."/>
            <person name="Sherman D."/>
            <person name="Fischer G."/>
            <person name="Durrens P."/>
            <person name="Casaregola S."/>
            <person name="Lafontaine I."/>
            <person name="de Montigny J."/>
            <person name="Marck C."/>
            <person name="Neuveglise C."/>
            <person name="Talla E."/>
            <person name="Goffard N."/>
            <person name="Frangeul L."/>
            <person name="Aigle M."/>
            <person name="Anthouard V."/>
            <person name="Babour A."/>
            <person name="Barbe V."/>
            <person name="Barnay S."/>
            <person name="Blanchin S."/>
            <person name="Beckerich J.-M."/>
            <person name="Beyne E."/>
            <person name="Bleykasten C."/>
            <person name="Boisrame A."/>
            <person name="Boyer J."/>
            <person name="Cattolico L."/>
            <person name="Confanioleri F."/>
            <person name="de Daruvar A."/>
            <person name="Despons L."/>
            <person name="Fabre E."/>
            <person name="Fairhead C."/>
            <person name="Ferry-Dumazet H."/>
            <person name="Groppi A."/>
            <person name="Hantraye F."/>
            <person name="Hennequin C."/>
            <person name="Jauniaux N."/>
            <person name="Joyet P."/>
            <person name="Kachouri R."/>
            <person name="Kerrest A."/>
            <person name="Koszul R."/>
            <person name="Lemaire M."/>
            <person name="Lesur I."/>
            <person name="Ma L."/>
            <person name="Muller H."/>
            <person name="Nicaud J.-M."/>
            <person name="Nikolski M."/>
            <person name="Oztas S."/>
            <person name="Ozier-Kalogeropoulos O."/>
            <person name="Pellenz S."/>
            <person name="Potier S."/>
            <person name="Richard G.-F."/>
            <person name="Straub M.-L."/>
            <person name="Suleau A."/>
            <person name="Swennen D."/>
            <person name="Tekaia F."/>
            <person name="Wesolowski-Louvel M."/>
            <person name="Westhof E."/>
            <person name="Wirth B."/>
            <person name="Zeniou-Meyer M."/>
            <person name="Zivanovic Y."/>
            <person name="Bolotin-Fukuhara M."/>
            <person name="Thierry A."/>
            <person name="Bouchier C."/>
            <person name="Caudron B."/>
            <person name="Scarpelli C."/>
            <person name="Gaillardin C."/>
            <person name="Weissenbach J."/>
            <person name="Wincker P."/>
            <person name="Souciet J.-L."/>
        </authorList>
    </citation>
    <scope>NUCLEOTIDE SEQUENCE [LARGE SCALE GENOMIC DNA]</scope>
    <source>
        <strain>ATCC 8585 / CBS 2359 / DSM 70799 / NBRC 1267 / NRRL Y-1140 / WM37</strain>
    </source>
</reference>
<reference key="3">
    <citation type="journal article" date="1992" name="J. Mol. Biol.">
        <title>Changing the specificity of the sorting receptor for luminal endoplasmic reticulum proteins.</title>
        <authorList>
            <person name="Semenza J.C."/>
            <person name="Pelham H.R.B."/>
        </authorList>
    </citation>
    <scope>RESIDUE IMPORTANT FOR SPECIFICITY</scope>
</reference>
<sequence length="219" mass="25851">MLNVFRIAGDFSHLASIIILIQSITTSNSVDGISLKTQLLYTLVFITRYLNLFTKWTSLYNFLMKIVFISSSVYVIVLMRQQKFKNPVAYQDMITRDQFKIKFLIVPCILLGLIFNYRFSFIQICWSFSLWLESVAILPQLFMLTKTGKAKQLTSHYIFALGLYRALYIPNWIWRYYTEERFDKLSVFTGVIQTLVYSDFFYIYYQKVIKLGGDLELPQ</sequence>
<proteinExistence type="inferred from homology"/>
<organism>
    <name type="scientific">Kluyveromyces lactis (strain ATCC 8585 / CBS 2359 / DSM 70799 / NBRC 1267 / NRRL Y-1140 / WM37)</name>
    <name type="common">Yeast</name>
    <name type="synonym">Candida sphaerica</name>
    <dbReference type="NCBI Taxonomy" id="284590"/>
    <lineage>
        <taxon>Eukaryota</taxon>
        <taxon>Fungi</taxon>
        <taxon>Dikarya</taxon>
        <taxon>Ascomycota</taxon>
        <taxon>Saccharomycotina</taxon>
        <taxon>Saccharomycetes</taxon>
        <taxon>Saccharomycetales</taxon>
        <taxon>Saccharomycetaceae</taxon>
        <taxon>Kluyveromyces</taxon>
    </lineage>
</organism>
<evidence type="ECO:0000255" key="1"/>
<evidence type="ECO:0000305" key="2"/>
<feature type="chain" id="PRO_0000194169" description="ER lumen protein-retaining receptor">
    <location>
        <begin position="1"/>
        <end position="219"/>
    </location>
</feature>
<feature type="topological domain" description="Lumenal" evidence="1">
    <location>
        <begin position="1"/>
        <end position="3"/>
    </location>
</feature>
<feature type="transmembrane region" description="Helical" evidence="1">
    <location>
        <begin position="4"/>
        <end position="22"/>
    </location>
</feature>
<feature type="topological domain" description="Cytoplasmic" evidence="1">
    <location>
        <begin position="23"/>
        <end position="36"/>
    </location>
</feature>
<feature type="transmembrane region" description="Helical" evidence="1">
    <location>
        <begin position="37"/>
        <end position="54"/>
    </location>
</feature>
<feature type="topological domain" description="Lumenal" evidence="1">
    <location>
        <begin position="55"/>
        <end position="62"/>
    </location>
</feature>
<feature type="transmembrane region" description="Helical" evidence="1">
    <location>
        <begin position="63"/>
        <end position="82"/>
    </location>
</feature>
<feature type="topological domain" description="Cytoplasmic" evidence="1">
    <location>
        <begin position="83"/>
        <end position="102"/>
    </location>
</feature>
<feature type="transmembrane region" description="Helical" evidence="1">
    <location>
        <begin position="103"/>
        <end position="116"/>
    </location>
</feature>
<feature type="topological domain" description="Lumenal" evidence="1">
    <location>
        <begin position="117"/>
        <end position="123"/>
    </location>
</feature>
<feature type="transmembrane region" description="Helical" evidence="1">
    <location>
        <begin position="124"/>
        <end position="143"/>
    </location>
</feature>
<feature type="topological domain" description="Cytoplasmic" evidence="1">
    <location>
        <begin position="144"/>
        <end position="155"/>
    </location>
</feature>
<feature type="transmembrane region" description="Helical" evidence="1">
    <location>
        <begin position="156"/>
        <end position="174"/>
    </location>
</feature>
<feature type="topological domain" description="Lumenal" evidence="1">
    <location>
        <begin position="175"/>
        <end position="184"/>
    </location>
</feature>
<feature type="transmembrane region" description="Helical" evidence="1">
    <location>
        <begin position="185"/>
        <end position="205"/>
    </location>
</feature>
<feature type="topological domain" description="Cytoplasmic" evidence="1">
    <location>
        <begin position="206"/>
        <end position="219"/>
    </location>
</feature>
<feature type="site" description="Important for specificity of recognition">
    <location>
        <position position="51"/>
    </location>
</feature>
<comment type="function">
    <text>Required for the retention of luminal endoplasmic reticulum proteins. Determines the specificity of the luminal ER protein retention system. Also required for normal vesicular traffic through the Golgi. This receptor recognizes H-D-E-L and D-D-E-L, but not K-D-E-L.</text>
</comment>
<comment type="subcellular location">
    <subcellularLocation>
        <location>Endoplasmic reticulum membrane</location>
        <topology>Multi-pass membrane protein</topology>
    </subcellularLocation>
</comment>
<comment type="similarity">
    <text evidence="2">Belongs to the ERD2 family.</text>
</comment>
<keyword id="KW-0256">Endoplasmic reticulum</keyword>
<keyword id="KW-0931">ER-Golgi transport</keyword>
<keyword id="KW-0472">Membrane</keyword>
<keyword id="KW-0653">Protein transport</keyword>
<keyword id="KW-0675">Receptor</keyword>
<keyword id="KW-1185">Reference proteome</keyword>
<keyword id="KW-0812">Transmembrane</keyword>
<keyword id="KW-1133">Transmembrane helix</keyword>
<keyword id="KW-0813">Transport</keyword>
<name>ERD2_KLULA</name>
<accession>P18413</accession>